<proteinExistence type="inferred from homology"/>
<keyword id="KW-0963">Cytoplasm</keyword>
<keyword id="KW-0489">Methyltransferase</keyword>
<keyword id="KW-0698">rRNA processing</keyword>
<keyword id="KW-0949">S-adenosyl-L-methionine</keyword>
<keyword id="KW-0808">Transferase</keyword>
<sequence>MSIEWLSEKLSEQGIELSNTQKEQFQKYYKLLVEWNKKMNLTSITDEHDVYLKHFYDSIAPSFYYDFNGQLSLCDIGAGAGFPSIPLKIVYPELKVTIVDSLNKRIQFLNHLAAELGLEDVSFVHDRAETYGKGVYRESYDIVTARAVARLTVLSELCLPLVNKGGQFLALKSSKGKEELQEATFAINILGGNVKETYTFELPENAGERQMIIIDKRRQTSKKYPRKPGTPNKSPLVES</sequence>
<name>RSMG_STAES</name>
<feature type="chain" id="PRO_0000184334" description="Ribosomal RNA small subunit methyltransferase G">
    <location>
        <begin position="1"/>
        <end position="239"/>
    </location>
</feature>
<feature type="region of interest" description="Disordered" evidence="2">
    <location>
        <begin position="217"/>
        <end position="239"/>
    </location>
</feature>
<feature type="binding site" evidence="1">
    <location>
        <position position="77"/>
    </location>
    <ligand>
        <name>S-adenosyl-L-methionine</name>
        <dbReference type="ChEBI" id="CHEBI:59789"/>
    </ligand>
</feature>
<feature type="binding site" evidence="1">
    <location>
        <position position="82"/>
    </location>
    <ligand>
        <name>S-adenosyl-L-methionine</name>
        <dbReference type="ChEBI" id="CHEBI:59789"/>
    </ligand>
</feature>
<feature type="binding site" evidence="1">
    <location>
        <begin position="128"/>
        <end position="129"/>
    </location>
    <ligand>
        <name>S-adenosyl-L-methionine</name>
        <dbReference type="ChEBI" id="CHEBI:59789"/>
    </ligand>
</feature>
<feature type="binding site" evidence="1">
    <location>
        <position position="146"/>
    </location>
    <ligand>
        <name>S-adenosyl-L-methionine</name>
        <dbReference type="ChEBI" id="CHEBI:59789"/>
    </ligand>
</feature>
<protein>
    <recommendedName>
        <fullName evidence="1">Ribosomal RNA small subunit methyltransferase G</fullName>
        <ecNumber evidence="1">2.1.1.-</ecNumber>
    </recommendedName>
    <alternativeName>
        <fullName evidence="1">16S rRNA 7-methylguanosine methyltransferase</fullName>
        <shortName evidence="1">16S rRNA m7G methyltransferase</shortName>
    </alternativeName>
</protein>
<gene>
    <name evidence="1" type="primary">rsmG</name>
    <name type="ordered locus">SE_2415</name>
</gene>
<dbReference type="EC" id="2.1.1.-" evidence="1"/>
<dbReference type="EMBL" id="AE015929">
    <property type="protein sequence ID" value="AAO06058.1"/>
    <property type="molecule type" value="Genomic_DNA"/>
</dbReference>
<dbReference type="RefSeq" id="NP_765970.1">
    <property type="nucleotide sequence ID" value="NC_004461.1"/>
</dbReference>
<dbReference type="RefSeq" id="WP_002437291.1">
    <property type="nucleotide sequence ID" value="NZ_WBME01000012.1"/>
</dbReference>
<dbReference type="SMR" id="Q8CMN7"/>
<dbReference type="GeneID" id="50019720"/>
<dbReference type="KEGG" id="sep:SE_2415"/>
<dbReference type="PATRIC" id="fig|176280.10.peg.2354"/>
<dbReference type="eggNOG" id="COG0357">
    <property type="taxonomic scope" value="Bacteria"/>
</dbReference>
<dbReference type="HOGENOM" id="CLU_065341_0_0_9"/>
<dbReference type="OrthoDB" id="9808773at2"/>
<dbReference type="Proteomes" id="UP000001411">
    <property type="component" value="Chromosome"/>
</dbReference>
<dbReference type="GO" id="GO:0005829">
    <property type="term" value="C:cytosol"/>
    <property type="evidence" value="ECO:0007669"/>
    <property type="project" value="TreeGrafter"/>
</dbReference>
<dbReference type="GO" id="GO:0070043">
    <property type="term" value="F:rRNA (guanine-N7-)-methyltransferase activity"/>
    <property type="evidence" value="ECO:0007669"/>
    <property type="project" value="UniProtKB-UniRule"/>
</dbReference>
<dbReference type="CDD" id="cd02440">
    <property type="entry name" value="AdoMet_MTases"/>
    <property type="match status" value="1"/>
</dbReference>
<dbReference type="FunFam" id="3.40.50.150:FF:000041">
    <property type="entry name" value="Ribosomal RNA small subunit methyltransferase G"/>
    <property type="match status" value="1"/>
</dbReference>
<dbReference type="Gene3D" id="3.40.50.150">
    <property type="entry name" value="Vaccinia Virus protein VP39"/>
    <property type="match status" value="1"/>
</dbReference>
<dbReference type="HAMAP" id="MF_00074">
    <property type="entry name" value="16SrRNA_methyltr_G"/>
    <property type="match status" value="1"/>
</dbReference>
<dbReference type="InterPro" id="IPR003682">
    <property type="entry name" value="rRNA_ssu_MeTfrase_G"/>
</dbReference>
<dbReference type="InterPro" id="IPR029063">
    <property type="entry name" value="SAM-dependent_MTases_sf"/>
</dbReference>
<dbReference type="NCBIfam" id="TIGR00138">
    <property type="entry name" value="rsmG_gidB"/>
    <property type="match status" value="1"/>
</dbReference>
<dbReference type="PANTHER" id="PTHR31760">
    <property type="entry name" value="S-ADENOSYL-L-METHIONINE-DEPENDENT METHYLTRANSFERASES SUPERFAMILY PROTEIN"/>
    <property type="match status" value="1"/>
</dbReference>
<dbReference type="PANTHER" id="PTHR31760:SF0">
    <property type="entry name" value="S-ADENOSYL-L-METHIONINE-DEPENDENT METHYLTRANSFERASES SUPERFAMILY PROTEIN"/>
    <property type="match status" value="1"/>
</dbReference>
<dbReference type="Pfam" id="PF02527">
    <property type="entry name" value="GidB"/>
    <property type="match status" value="1"/>
</dbReference>
<dbReference type="PIRSF" id="PIRSF003078">
    <property type="entry name" value="GidB"/>
    <property type="match status" value="1"/>
</dbReference>
<dbReference type="SUPFAM" id="SSF53335">
    <property type="entry name" value="S-adenosyl-L-methionine-dependent methyltransferases"/>
    <property type="match status" value="1"/>
</dbReference>
<reference key="1">
    <citation type="journal article" date="2003" name="Mol. Microbiol.">
        <title>Genome-based analysis of virulence genes in a non-biofilm-forming Staphylococcus epidermidis strain (ATCC 12228).</title>
        <authorList>
            <person name="Zhang Y.-Q."/>
            <person name="Ren S.-X."/>
            <person name="Li H.-L."/>
            <person name="Wang Y.-X."/>
            <person name="Fu G."/>
            <person name="Yang J."/>
            <person name="Qin Z.-Q."/>
            <person name="Miao Y.-G."/>
            <person name="Wang W.-Y."/>
            <person name="Chen R.-S."/>
            <person name="Shen Y."/>
            <person name="Chen Z."/>
            <person name="Yuan Z.-H."/>
            <person name="Zhao G.-P."/>
            <person name="Qu D."/>
            <person name="Danchin A."/>
            <person name="Wen Y.-M."/>
        </authorList>
    </citation>
    <scope>NUCLEOTIDE SEQUENCE [LARGE SCALE GENOMIC DNA]</scope>
    <source>
        <strain>ATCC 12228 / FDA PCI 1200</strain>
    </source>
</reference>
<evidence type="ECO:0000255" key="1">
    <source>
        <dbReference type="HAMAP-Rule" id="MF_00074"/>
    </source>
</evidence>
<evidence type="ECO:0000256" key="2">
    <source>
        <dbReference type="SAM" id="MobiDB-lite"/>
    </source>
</evidence>
<organism>
    <name type="scientific">Staphylococcus epidermidis (strain ATCC 12228 / FDA PCI 1200)</name>
    <dbReference type="NCBI Taxonomy" id="176280"/>
    <lineage>
        <taxon>Bacteria</taxon>
        <taxon>Bacillati</taxon>
        <taxon>Bacillota</taxon>
        <taxon>Bacilli</taxon>
        <taxon>Bacillales</taxon>
        <taxon>Staphylococcaceae</taxon>
        <taxon>Staphylococcus</taxon>
    </lineage>
</organism>
<comment type="function">
    <text evidence="1">Specifically methylates the N7 position of guanine in position 535 of 16S rRNA.</text>
</comment>
<comment type="subcellular location">
    <subcellularLocation>
        <location evidence="1">Cytoplasm</location>
    </subcellularLocation>
</comment>
<comment type="similarity">
    <text evidence="1">Belongs to the methyltransferase superfamily. RNA methyltransferase RsmG family.</text>
</comment>
<accession>Q8CMN7</accession>